<evidence type="ECO:0000250" key="1"/>
<evidence type="ECO:0000250" key="2">
    <source>
        <dbReference type="UniProtKB" id="Q92021"/>
    </source>
</evidence>
<evidence type="ECO:0000255" key="3"/>
<evidence type="ECO:0000255" key="4">
    <source>
        <dbReference type="PROSITE-ProRule" id="PRU00024"/>
    </source>
</evidence>
<evidence type="ECO:0000255" key="5">
    <source>
        <dbReference type="PROSITE-ProRule" id="PRU00175"/>
    </source>
</evidence>
<evidence type="ECO:0000255" key="6">
    <source>
        <dbReference type="PROSITE-ProRule" id="PRU00548"/>
    </source>
</evidence>
<evidence type="ECO:0000256" key="7">
    <source>
        <dbReference type="SAM" id="MobiDB-lite"/>
    </source>
</evidence>
<evidence type="ECO:0000269" key="8">
    <source>
    </source>
</evidence>
<evidence type="ECO:0000303" key="9">
    <source ref="2"/>
</evidence>
<evidence type="ECO:0000305" key="10"/>
<evidence type="ECO:0000312" key="11">
    <source>
        <dbReference type="EMBL" id="AAB35876.1"/>
    </source>
</evidence>
<evidence type="ECO:0000312" key="12">
    <source>
        <dbReference type="EMBL" id="AAH47956.1"/>
    </source>
</evidence>
<proteinExistence type="evidence at transcript level"/>
<feature type="chain" id="PRO_0000055978" description="Nuclear factor 7, ovary">
    <location>
        <begin position="1"/>
        <end position="610"/>
    </location>
</feature>
<feature type="domain" description="Tudor-knot" evidence="3">
    <location>
        <begin position="21"/>
        <end position="75"/>
    </location>
</feature>
<feature type="domain" description="B30.2/SPRY" evidence="6">
    <location>
        <begin position="415"/>
        <end position="610"/>
    </location>
</feature>
<feature type="zinc finger region" description="RING-type" evidence="5">
    <location>
        <begin position="146"/>
        <end position="186"/>
    </location>
</feature>
<feature type="zinc finger region" description="B box-type" evidence="4">
    <location>
        <begin position="220"/>
        <end position="261"/>
    </location>
</feature>
<feature type="region of interest" description="Disordered" evidence="7">
    <location>
        <begin position="79"/>
        <end position="127"/>
    </location>
</feature>
<feature type="coiled-coil region" evidence="3">
    <location>
        <begin position="295"/>
        <end position="374"/>
    </location>
</feature>
<feature type="compositionally biased region" description="Basic and acidic residues" evidence="7">
    <location>
        <begin position="108"/>
        <end position="127"/>
    </location>
</feature>
<feature type="binding site" evidence="4">
    <location>
        <position position="225"/>
    </location>
    <ligand>
        <name>Zn(2+)</name>
        <dbReference type="ChEBI" id="CHEBI:29105"/>
    </ligand>
</feature>
<feature type="binding site" evidence="4">
    <location>
        <position position="228"/>
    </location>
    <ligand>
        <name>Zn(2+)</name>
        <dbReference type="ChEBI" id="CHEBI:29105"/>
    </ligand>
</feature>
<feature type="binding site" evidence="4">
    <location>
        <position position="247"/>
    </location>
    <ligand>
        <name>Zn(2+)</name>
        <dbReference type="ChEBI" id="CHEBI:29105"/>
    </ligand>
</feature>
<feature type="binding site" evidence="4">
    <location>
        <position position="253"/>
    </location>
    <ligand>
        <name>Zn(2+)</name>
        <dbReference type="ChEBI" id="CHEBI:29105"/>
    </ligand>
</feature>
<feature type="modified residue" description="Phosphothreonine; by CDK1" evidence="1">
    <location>
        <position position="104"/>
    </location>
</feature>
<feature type="splice variant" id="VSP_051606" description="In isoform 2." evidence="9">
    <location>
        <begin position="62"/>
        <end position="118"/>
    </location>
</feature>
<feature type="sequence conflict" description="In Ref. 2; AAH47956." evidence="10" ref="2">
    <original>I</original>
    <variation>V</variation>
    <location>
        <position position="265"/>
    </location>
</feature>
<feature type="sequence conflict" description="In Ref. 2; AAH47956." evidence="10" ref="2">
    <original>R</original>
    <variation>A</variation>
    <location>
        <position position="533"/>
    </location>
</feature>
<dbReference type="EMBL" id="S80988">
    <property type="protein sequence ID" value="AAB35876.1"/>
    <property type="molecule type" value="mRNA"/>
</dbReference>
<dbReference type="EMBL" id="BC047956">
    <property type="protein sequence ID" value="AAH47956.1"/>
    <property type="status" value="ALT_FRAME"/>
    <property type="molecule type" value="mRNA"/>
</dbReference>
<dbReference type="RefSeq" id="NP_001079694.2">
    <molecule id="Q91431-1"/>
    <property type="nucleotide sequence ID" value="NM_001086225.2"/>
</dbReference>
<dbReference type="SMR" id="Q91431"/>
<dbReference type="IntAct" id="Q91431">
    <property type="interactions" value="2"/>
</dbReference>
<dbReference type="DNASU" id="379381"/>
<dbReference type="GeneID" id="379381"/>
<dbReference type="KEGG" id="xla:379381"/>
<dbReference type="AGR" id="Xenbase:XB-GENE-6256071"/>
<dbReference type="CTD" id="379381"/>
<dbReference type="Xenbase" id="XB-GENE-6256071">
    <property type="gene designation" value="xnf7.S"/>
</dbReference>
<dbReference type="OrthoDB" id="128536at2759"/>
<dbReference type="Proteomes" id="UP000186698">
    <property type="component" value="Chromosome 9_10S"/>
</dbReference>
<dbReference type="Bgee" id="379381">
    <property type="expression patterns" value="Expressed in neurula embryo and 19 other cell types or tissues"/>
</dbReference>
<dbReference type="GO" id="GO:0005737">
    <property type="term" value="C:cytoplasm"/>
    <property type="evidence" value="ECO:0000318"/>
    <property type="project" value="GO_Central"/>
</dbReference>
<dbReference type="GO" id="GO:0005634">
    <property type="term" value="C:nucleus"/>
    <property type="evidence" value="ECO:0007669"/>
    <property type="project" value="UniProtKB-SubCell"/>
</dbReference>
<dbReference type="GO" id="GO:0003677">
    <property type="term" value="F:DNA binding"/>
    <property type="evidence" value="ECO:0007669"/>
    <property type="project" value="UniProtKB-KW"/>
</dbReference>
<dbReference type="GO" id="GO:0061630">
    <property type="term" value="F:ubiquitin protein ligase activity"/>
    <property type="evidence" value="ECO:0000318"/>
    <property type="project" value="GO_Central"/>
</dbReference>
<dbReference type="GO" id="GO:0008270">
    <property type="term" value="F:zinc ion binding"/>
    <property type="evidence" value="ECO:0007669"/>
    <property type="project" value="UniProtKB-KW"/>
</dbReference>
<dbReference type="GO" id="GO:0045087">
    <property type="term" value="P:innate immune response"/>
    <property type="evidence" value="ECO:0000318"/>
    <property type="project" value="GO_Central"/>
</dbReference>
<dbReference type="CDD" id="cd19800">
    <property type="entry name" value="Bbox2_xNF7-like"/>
    <property type="match status" value="1"/>
</dbReference>
<dbReference type="CDD" id="cd18984">
    <property type="entry name" value="CBD_MOF_like"/>
    <property type="match status" value="1"/>
</dbReference>
<dbReference type="CDD" id="cd16594">
    <property type="entry name" value="RING-HC_TRIM7-like_C-IV"/>
    <property type="match status" value="1"/>
</dbReference>
<dbReference type="CDD" id="cd13733">
    <property type="entry name" value="SPRY_PRY_C-I_1"/>
    <property type="match status" value="1"/>
</dbReference>
<dbReference type="FunFam" id="2.60.120.920:FF:000004">
    <property type="entry name" value="Butyrophilin subfamily 1 member A1"/>
    <property type="match status" value="1"/>
</dbReference>
<dbReference type="Gene3D" id="2.30.30.140">
    <property type="match status" value="1"/>
</dbReference>
<dbReference type="Gene3D" id="2.60.120.920">
    <property type="match status" value="1"/>
</dbReference>
<dbReference type="Gene3D" id="3.30.160.60">
    <property type="entry name" value="Classic Zinc Finger"/>
    <property type="match status" value="1"/>
</dbReference>
<dbReference type="Gene3D" id="3.30.40.10">
    <property type="entry name" value="Zinc/RING finger domain, C3HC4 (zinc finger)"/>
    <property type="match status" value="1"/>
</dbReference>
<dbReference type="InterPro" id="IPR001870">
    <property type="entry name" value="B30.2/SPRY"/>
</dbReference>
<dbReference type="InterPro" id="IPR043136">
    <property type="entry name" value="B30.2/SPRY_sf"/>
</dbReference>
<dbReference type="InterPro" id="IPR003649">
    <property type="entry name" value="Bbox_C"/>
</dbReference>
<dbReference type="InterPro" id="IPR003879">
    <property type="entry name" value="Butyrophylin_SPRY"/>
</dbReference>
<dbReference type="InterPro" id="IPR016197">
    <property type="entry name" value="Chromo-like_dom_sf"/>
</dbReference>
<dbReference type="InterPro" id="IPR000953">
    <property type="entry name" value="Chromo/chromo_shadow_dom"/>
</dbReference>
<dbReference type="InterPro" id="IPR013320">
    <property type="entry name" value="ConA-like_dom_sf"/>
</dbReference>
<dbReference type="InterPro" id="IPR006574">
    <property type="entry name" value="PRY"/>
</dbReference>
<dbReference type="InterPro" id="IPR003877">
    <property type="entry name" value="SPRY_dom"/>
</dbReference>
<dbReference type="InterPro" id="IPR050143">
    <property type="entry name" value="TRIM/RBCC"/>
</dbReference>
<dbReference type="InterPro" id="IPR025995">
    <property type="entry name" value="Tudor-knot"/>
</dbReference>
<dbReference type="InterPro" id="IPR000315">
    <property type="entry name" value="Znf_B-box"/>
</dbReference>
<dbReference type="InterPro" id="IPR001841">
    <property type="entry name" value="Znf_RING"/>
</dbReference>
<dbReference type="InterPro" id="IPR013083">
    <property type="entry name" value="Znf_RING/FYVE/PHD"/>
</dbReference>
<dbReference type="InterPro" id="IPR017907">
    <property type="entry name" value="Znf_RING_CS"/>
</dbReference>
<dbReference type="PANTHER" id="PTHR24103">
    <property type="entry name" value="E3 UBIQUITIN-PROTEIN LIGASE TRIM"/>
    <property type="match status" value="1"/>
</dbReference>
<dbReference type="Pfam" id="PF13765">
    <property type="entry name" value="PRY"/>
    <property type="match status" value="1"/>
</dbReference>
<dbReference type="Pfam" id="PF00622">
    <property type="entry name" value="SPRY"/>
    <property type="match status" value="1"/>
</dbReference>
<dbReference type="Pfam" id="PF11717">
    <property type="entry name" value="Tudor-knot"/>
    <property type="match status" value="1"/>
</dbReference>
<dbReference type="Pfam" id="PF00643">
    <property type="entry name" value="zf-B_box"/>
    <property type="match status" value="1"/>
</dbReference>
<dbReference type="Pfam" id="PF15227">
    <property type="entry name" value="zf-C3HC4_4"/>
    <property type="match status" value="1"/>
</dbReference>
<dbReference type="PRINTS" id="PR01407">
    <property type="entry name" value="BUTYPHLNCDUF"/>
</dbReference>
<dbReference type="SMART" id="SM00502">
    <property type="entry name" value="BBC"/>
    <property type="match status" value="1"/>
</dbReference>
<dbReference type="SMART" id="SM00336">
    <property type="entry name" value="BBOX"/>
    <property type="match status" value="1"/>
</dbReference>
<dbReference type="SMART" id="SM00298">
    <property type="entry name" value="CHROMO"/>
    <property type="match status" value="1"/>
</dbReference>
<dbReference type="SMART" id="SM00589">
    <property type="entry name" value="PRY"/>
    <property type="match status" value="1"/>
</dbReference>
<dbReference type="SMART" id="SM00184">
    <property type="entry name" value="RING"/>
    <property type="match status" value="1"/>
</dbReference>
<dbReference type="SMART" id="SM00449">
    <property type="entry name" value="SPRY"/>
    <property type="match status" value="1"/>
</dbReference>
<dbReference type="SUPFAM" id="SSF57845">
    <property type="entry name" value="B-box zinc-binding domain"/>
    <property type="match status" value="1"/>
</dbReference>
<dbReference type="SUPFAM" id="SSF54160">
    <property type="entry name" value="Chromo domain-like"/>
    <property type="match status" value="1"/>
</dbReference>
<dbReference type="SUPFAM" id="SSF49899">
    <property type="entry name" value="Concanavalin A-like lectins/glucanases"/>
    <property type="match status" value="1"/>
</dbReference>
<dbReference type="SUPFAM" id="SSF57850">
    <property type="entry name" value="RING/U-box"/>
    <property type="match status" value="1"/>
</dbReference>
<dbReference type="PROSITE" id="PS50188">
    <property type="entry name" value="B302_SPRY"/>
    <property type="match status" value="1"/>
</dbReference>
<dbReference type="PROSITE" id="PS50119">
    <property type="entry name" value="ZF_BBOX"/>
    <property type="match status" value="1"/>
</dbReference>
<dbReference type="PROSITE" id="PS00518">
    <property type="entry name" value="ZF_RING_1"/>
    <property type="match status" value="1"/>
</dbReference>
<dbReference type="PROSITE" id="PS50089">
    <property type="entry name" value="ZF_RING_2"/>
    <property type="match status" value="1"/>
</dbReference>
<name>NF7O_XENLA</name>
<protein>
    <recommendedName>
        <fullName>Nuclear factor 7, ovary</fullName>
        <shortName>xNF7-O</shortName>
    </recommendedName>
</protein>
<sequence>MEEDEGADDGEQEEEEVLLVNVGSTYPCKRSDGSQHDADIVKTRYNKQAGREEYYVHYVGLNRRQNEWVDKSRLVLTKPPKEVETNGTDQEEMTEPTEQPDSKTPQKRKLEEPEPEPKKAKVEDKDASKTAASLGAAGDFAEELTCPLCVELFKDPVMVACGHNFCRSCIDKVWEGQSSFACPECKESITDRKYTINRVLANLAKKAACTPVTPVEKKTRPLEKCSEHDERLKLYCKDDGTLGCVICRDSLKHASHNFLPILDAIGVYREELSAIVAPLEASLKVTEQLSGEQSDKIEQHNKNVSQYKEHVTSEFEKLHKFLKEREEKLLEQLKEQGDNLLTEMENNLVKMQENQDAIKKTISLAKERMEETDSISFLTDIKTFIDKCQEQQRAVISTGNTLLSKELCQGTFKGPIQYIMWKELKSVITPSLTPMLLDPNSAHPNLHLSDGLTSVRYGENKLSLPDNPKRFSQCILVLGSQGFDSGRHYWEVEVGDKTAWDVGMASESSNRKGKIKLNPKNGYWAIWLRNGNRYKALESPSKALSLTSHPRKIGVYVDYEGGQISFYNADNMTIIYTFSATFTEKLYPYLSPFLHDSGKNVDALRFVHNQ</sequence>
<keyword id="KW-0025">Alternative splicing</keyword>
<keyword id="KW-0175">Coiled coil</keyword>
<keyword id="KW-0217">Developmental protein</keyword>
<keyword id="KW-0238">DNA-binding</keyword>
<keyword id="KW-0479">Metal-binding</keyword>
<keyword id="KW-0539">Nucleus</keyword>
<keyword id="KW-0597">Phosphoprotein</keyword>
<keyword id="KW-1185">Reference proteome</keyword>
<keyword id="KW-0804">Transcription</keyword>
<keyword id="KW-0805">Transcription regulation</keyword>
<keyword id="KW-0862">Zinc</keyword>
<keyword id="KW-0863">Zinc-finger</keyword>
<reference evidence="10 11" key="1">
    <citation type="journal article" date="1995" name="Mech. Dev.">
        <title>Two forms of Xenopus nuclear factor 7 have overlapping spatial but different temporal patterns of expression during development.</title>
        <authorList>
            <person name="Gong S.-G."/>
            <person name="Reddy B.A."/>
            <person name="Etkin L.D."/>
        </authorList>
    </citation>
    <scope>NUCLEOTIDE SEQUENCE [MRNA] (ISOFORM 1)</scope>
    <scope>FUNCTION</scope>
    <scope>TISSUE SPECIFICITY</scope>
    <scope>DEVELOPMENTAL STAGE</scope>
    <source>
        <tissue evidence="8">Ovary</tissue>
    </source>
</reference>
<reference evidence="10 12" key="2">
    <citation type="submission" date="2003-03" db="EMBL/GenBank/DDBJ databases">
        <authorList>
            <consortium name="NIH - Xenopus Gene Collection (XGC) project"/>
        </authorList>
    </citation>
    <scope>NUCLEOTIDE SEQUENCE [LARGE SCALE MRNA] (ISOFORM 2)</scope>
    <source>
        <tissue evidence="12">Embryo</tissue>
    </source>
</reference>
<accession>Q91431</accession>
<accession>Q801R9</accession>
<organism>
    <name type="scientific">Xenopus laevis</name>
    <name type="common">African clawed frog</name>
    <dbReference type="NCBI Taxonomy" id="8355"/>
    <lineage>
        <taxon>Eukaryota</taxon>
        <taxon>Metazoa</taxon>
        <taxon>Chordata</taxon>
        <taxon>Craniata</taxon>
        <taxon>Vertebrata</taxon>
        <taxon>Euteleostomi</taxon>
        <taxon>Amphibia</taxon>
        <taxon>Batrachia</taxon>
        <taxon>Anura</taxon>
        <taxon>Pipoidea</taxon>
        <taxon>Pipidae</taxon>
        <taxon>Xenopodinae</taxon>
        <taxon>Xenopus</taxon>
        <taxon>Xenopus</taxon>
    </lineage>
</organism>
<comment type="function">
    <text evidence="8">Transcription factor that determines dorsal-ventral body axis.</text>
</comment>
<comment type="subunit">
    <text evidence="2">Monomer.</text>
</comment>
<comment type="subcellular location">
    <subcellularLocation>
        <location evidence="1">Nucleus</location>
    </subcellularLocation>
</comment>
<comment type="alternative products">
    <event type="alternative splicing"/>
    <isoform>
        <id>Q91431-1</id>
        <name evidence="8">1</name>
        <sequence type="displayed"/>
    </isoform>
    <isoform>
        <id>Q91431-2</id>
        <name evidence="10">2</name>
        <sequence type="described" ref="VSP_051606"/>
    </isoform>
</comment>
<comment type="tissue specificity">
    <text evidence="8">Abundant in oocytes. At the neurula stage, low expression in dorsal embryo region including neural folds and somites.</text>
</comment>
<comment type="developmental stage">
    <text evidence="8">Expressed both maternally and zygotically.</text>
</comment>
<comment type="sequence caution" evidence="10">
    <conflict type="frameshift">
        <sequence resource="EMBL-CDS" id="AAH47956"/>
    </conflict>
</comment>